<evidence type="ECO:0000250" key="1"/>
<evidence type="ECO:0000255" key="2">
    <source>
        <dbReference type="PROSITE-ProRule" id="PRU00159"/>
    </source>
</evidence>
<evidence type="ECO:0000255" key="3">
    <source>
        <dbReference type="PROSITE-ProRule" id="PRU10027"/>
    </source>
</evidence>
<evidence type="ECO:0000269" key="4">
    <source>
    </source>
</evidence>
<evidence type="ECO:0000269" key="5">
    <source>
    </source>
</evidence>
<evidence type="ECO:0000269" key="6">
    <source>
    </source>
</evidence>
<evidence type="ECO:0000269" key="7">
    <source>
    </source>
</evidence>
<evidence type="ECO:0000269" key="8">
    <source>
    </source>
</evidence>
<evidence type="ECO:0000269" key="9">
    <source>
    </source>
</evidence>
<evidence type="ECO:0000269" key="10">
    <source>
    </source>
</evidence>
<evidence type="ECO:0000269" key="11">
    <source>
    </source>
</evidence>
<evidence type="ECO:0000269" key="12">
    <source>
    </source>
</evidence>
<evidence type="ECO:0000305" key="13"/>
<evidence type="ECO:0007829" key="14">
    <source>
        <dbReference type="PDB" id="2VGO"/>
    </source>
</evidence>
<evidence type="ECO:0007829" key="15">
    <source>
        <dbReference type="PDB" id="2VGP"/>
    </source>
</evidence>
<evidence type="ECO:0007829" key="16">
    <source>
        <dbReference type="PDB" id="4B8L"/>
    </source>
</evidence>
<evidence type="ECO:0007829" key="17">
    <source>
        <dbReference type="PDB" id="4C2V"/>
    </source>
</evidence>
<sequence length="361" mass="41735">MSYKENLNPSSYTSKFTTPSSATAAQRVLRKEPYVSTFTTPSDNLLAQRTQLSRITPSASSSVPGRVAVSTEMPSQNTALAEMPKRKFTIDDFDIGRPLGKGKFGNVYLAREKQNKFIMALKVLFKSQLEKEGVEHQLRREIEIQSHLRHPNILRMYNYFHDRKRIYLMLEFAPRGELYKELQKHGRFDEQRSATFMEELADALHYCHERKVIHRDIKPENLLMGYKGELKIADFGWSVHAPSLRRRTMCGTLDYLPPEMIEGKTHDEKVDLWCAGVLCYEFLVGMPPFDSPSHTETHRRIVNVDLKFPPFLSDGSKDLISKLLRYHPPQRLPLKGVMEHPWVKANSRRVLPPVYQSTQSK</sequence>
<organism>
    <name type="scientific">Xenopus laevis</name>
    <name type="common">African clawed frog</name>
    <dbReference type="NCBI Taxonomy" id="8355"/>
    <lineage>
        <taxon>Eukaryota</taxon>
        <taxon>Metazoa</taxon>
        <taxon>Chordata</taxon>
        <taxon>Craniata</taxon>
        <taxon>Vertebrata</taxon>
        <taxon>Euteleostomi</taxon>
        <taxon>Amphibia</taxon>
        <taxon>Batrachia</taxon>
        <taxon>Anura</taxon>
        <taxon>Pipoidea</taxon>
        <taxon>Pipidae</taxon>
        <taxon>Xenopodinae</taxon>
        <taxon>Xenopus</taxon>
        <taxon>Xenopus</taxon>
    </lineage>
</organism>
<protein>
    <recommendedName>
        <fullName>Aurora kinase B-A</fullName>
        <ecNumber>2.7.11.1</ecNumber>
    </recommendedName>
    <alternativeName>
        <fullName>Aurora/IPL1-related kinase 2-A</fullName>
        <shortName>AIRK2-A</shortName>
        <shortName>XAIRK2-A</shortName>
    </alternativeName>
    <alternativeName>
        <fullName>Serine/threonine-protein kinase 12-A</fullName>
    </alternativeName>
    <alternativeName>
        <fullName>Serine/threonine-protein kinase aurora-B-A</fullName>
        <shortName>xAurora-B</shortName>
    </alternativeName>
</protein>
<accession>Q6DE08</accession>
<accession>Q7ZYT9</accession>
<accession>Q8JG74</accession>
<accession>Q9DF70</accession>
<gene>
    <name type="primary">aurkb-a</name>
    <name type="synonym">airk2-a</name>
</gene>
<keyword id="KW-0002">3D-structure</keyword>
<keyword id="KW-0067">ATP-binding</keyword>
<keyword id="KW-0131">Cell cycle</keyword>
<keyword id="KW-0132">Cell division</keyword>
<keyword id="KW-0158">Chromosome</keyword>
<keyword id="KW-0159">Chromosome partition</keyword>
<keyword id="KW-0418">Kinase</keyword>
<keyword id="KW-0460">Magnesium</keyword>
<keyword id="KW-0479">Metal-binding</keyword>
<keyword id="KW-0498">Mitosis</keyword>
<keyword id="KW-0547">Nucleotide-binding</keyword>
<keyword id="KW-0539">Nucleus</keyword>
<keyword id="KW-0597">Phosphoprotein</keyword>
<keyword id="KW-1185">Reference proteome</keyword>
<keyword id="KW-0723">Serine/threonine-protein kinase</keyword>
<keyword id="KW-0808">Transferase</keyword>
<feature type="chain" id="PRO_0000281015" description="Aurora kinase B-A">
    <location>
        <begin position="1"/>
        <end position="361"/>
    </location>
</feature>
<feature type="domain" description="Protein kinase" evidence="2">
    <location>
        <begin position="93"/>
        <end position="343"/>
    </location>
</feature>
<feature type="active site" description="Proton acceptor" evidence="2 3">
    <location>
        <position position="216"/>
    </location>
</feature>
<feature type="binding site" evidence="2">
    <location>
        <begin position="99"/>
        <end position="107"/>
    </location>
    <ligand>
        <name>ATP</name>
        <dbReference type="ChEBI" id="CHEBI:30616"/>
    </ligand>
</feature>
<feature type="binding site" evidence="2">
    <location>
        <position position="122"/>
    </location>
    <ligand>
        <name>ATP</name>
        <dbReference type="ChEBI" id="CHEBI:30616"/>
    </ligand>
</feature>
<feature type="sequence conflict" description="In Ref. 1; AAG10787 and 2; AAM76715." evidence="13" ref="1 2">
    <original>S</original>
    <variation>E</variation>
    <location>
        <position position="2"/>
    </location>
</feature>
<feature type="sequence conflict" description="In Ref. 1; AAG10787." evidence="13" ref="1">
    <original>K</original>
    <variation>Q</variation>
    <location>
        <position position="87"/>
    </location>
</feature>
<feature type="turn" evidence="17">
    <location>
        <begin position="78"/>
        <end position="80"/>
    </location>
</feature>
<feature type="helix" evidence="17">
    <location>
        <begin position="90"/>
        <end position="92"/>
    </location>
</feature>
<feature type="strand" evidence="17">
    <location>
        <begin position="93"/>
        <end position="100"/>
    </location>
</feature>
<feature type="turn" evidence="15">
    <location>
        <begin position="103"/>
        <end position="105"/>
    </location>
</feature>
<feature type="strand" evidence="17">
    <location>
        <begin position="106"/>
        <end position="112"/>
    </location>
</feature>
<feature type="turn" evidence="17">
    <location>
        <begin position="113"/>
        <end position="116"/>
    </location>
</feature>
<feature type="strand" evidence="17">
    <location>
        <begin position="117"/>
        <end position="125"/>
    </location>
</feature>
<feature type="helix" evidence="17">
    <location>
        <begin position="126"/>
        <end position="131"/>
    </location>
</feature>
<feature type="turn" evidence="16">
    <location>
        <begin position="132"/>
        <end position="134"/>
    </location>
</feature>
<feature type="helix" evidence="17">
    <location>
        <begin position="135"/>
        <end position="146"/>
    </location>
</feature>
<feature type="strand" evidence="17">
    <location>
        <begin position="156"/>
        <end position="161"/>
    </location>
</feature>
<feature type="strand" evidence="17">
    <location>
        <begin position="163"/>
        <end position="170"/>
    </location>
</feature>
<feature type="helix" evidence="17">
    <location>
        <begin position="178"/>
        <end position="185"/>
    </location>
</feature>
<feature type="helix" evidence="17">
    <location>
        <begin position="190"/>
        <end position="208"/>
    </location>
</feature>
<feature type="turn" evidence="17">
    <location>
        <begin position="209"/>
        <end position="211"/>
    </location>
</feature>
<feature type="helix" evidence="17">
    <location>
        <begin position="219"/>
        <end position="221"/>
    </location>
</feature>
<feature type="strand" evidence="17">
    <location>
        <begin position="222"/>
        <end position="224"/>
    </location>
</feature>
<feature type="strand" evidence="17">
    <location>
        <begin position="230"/>
        <end position="232"/>
    </location>
</feature>
<feature type="strand" evidence="14">
    <location>
        <begin position="242"/>
        <end position="244"/>
    </location>
</feature>
<feature type="helix" evidence="17">
    <location>
        <begin position="253"/>
        <end position="255"/>
    </location>
</feature>
<feature type="helix" evidence="17">
    <location>
        <begin position="258"/>
        <end position="261"/>
    </location>
</feature>
<feature type="helix" evidence="17">
    <location>
        <begin position="270"/>
        <end position="284"/>
    </location>
</feature>
<feature type="helix" evidence="17">
    <location>
        <begin position="294"/>
        <end position="302"/>
    </location>
</feature>
<feature type="helix" evidence="17">
    <location>
        <begin position="314"/>
        <end position="323"/>
    </location>
</feature>
<feature type="helix" evidence="17">
    <location>
        <begin position="328"/>
        <end position="330"/>
    </location>
</feature>
<feature type="helix" evidence="17">
    <location>
        <begin position="334"/>
        <end position="338"/>
    </location>
</feature>
<feature type="helix" evidence="17">
    <location>
        <begin position="341"/>
        <end position="346"/>
    </location>
</feature>
<name>AUKBA_XENLA</name>
<dbReference type="EC" id="2.7.11.1"/>
<dbReference type="EMBL" id="AF292096">
    <property type="protein sequence ID" value="AAG10787.1"/>
    <property type="molecule type" value="mRNA"/>
</dbReference>
<dbReference type="EMBL" id="AY115554">
    <property type="protein sequence ID" value="AAM76715.1"/>
    <property type="molecule type" value="mRNA"/>
</dbReference>
<dbReference type="EMBL" id="BC041288">
    <property type="protein sequence ID" value="AAH41288.1"/>
    <property type="status" value="ALT_INIT"/>
    <property type="molecule type" value="mRNA"/>
</dbReference>
<dbReference type="EMBL" id="BC077339">
    <property type="protein sequence ID" value="AAH77339.1"/>
    <property type="molecule type" value="mRNA"/>
</dbReference>
<dbReference type="RefSeq" id="NP_001082418.1">
    <property type="nucleotide sequence ID" value="NM_001088949.1"/>
</dbReference>
<dbReference type="RefSeq" id="XP_018106316.1">
    <property type="nucleotide sequence ID" value="XM_018250827.1"/>
</dbReference>
<dbReference type="PDB" id="2BFX">
    <property type="method" value="X-ray"/>
    <property type="resolution" value="1.80 A"/>
    <property type="chains" value="A/B=78-361"/>
</dbReference>
<dbReference type="PDB" id="2BFY">
    <property type="method" value="X-ray"/>
    <property type="resolution" value="1.80 A"/>
    <property type="chains" value="A/B=78-361"/>
</dbReference>
<dbReference type="PDB" id="2VGO">
    <property type="method" value="X-ray"/>
    <property type="resolution" value="1.70 A"/>
    <property type="chains" value="A/B=78-361"/>
</dbReference>
<dbReference type="PDB" id="2VGP">
    <property type="method" value="X-ray"/>
    <property type="resolution" value="1.70 A"/>
    <property type="chains" value="A/B=78-361"/>
</dbReference>
<dbReference type="PDB" id="2VRX">
    <property type="method" value="X-ray"/>
    <property type="resolution" value="1.86 A"/>
    <property type="chains" value="A/B=77-361"/>
</dbReference>
<dbReference type="PDB" id="3ZTX">
    <property type="method" value="X-ray"/>
    <property type="resolution" value="1.95 A"/>
    <property type="chains" value="A/B=78-361"/>
</dbReference>
<dbReference type="PDB" id="4B8L">
    <property type="method" value="X-ray"/>
    <property type="resolution" value="3.00 A"/>
    <property type="chains" value="A=78-361"/>
</dbReference>
<dbReference type="PDB" id="4B8M">
    <property type="method" value="X-ray"/>
    <property type="resolution" value="1.85 A"/>
    <property type="chains" value="A/B=78-361"/>
</dbReference>
<dbReference type="PDB" id="4C2V">
    <property type="method" value="X-ray"/>
    <property type="resolution" value="1.49 A"/>
    <property type="chains" value="A/B=76-360"/>
</dbReference>
<dbReference type="PDB" id="4C2W">
    <property type="method" value="X-ray"/>
    <property type="resolution" value="1.70 A"/>
    <property type="chains" value="A/B=78-356"/>
</dbReference>
<dbReference type="PDB" id="5EYK">
    <property type="method" value="X-ray"/>
    <property type="resolution" value="1.93 A"/>
    <property type="chains" value="A/B=81-356"/>
</dbReference>
<dbReference type="PDB" id="5K3Y">
    <property type="method" value="X-ray"/>
    <property type="resolution" value="1.60 A"/>
    <property type="chains" value="A/B=78-356"/>
</dbReference>
<dbReference type="PDBsum" id="2BFX"/>
<dbReference type="PDBsum" id="2BFY"/>
<dbReference type="PDBsum" id="2VGO"/>
<dbReference type="PDBsum" id="2VGP"/>
<dbReference type="PDBsum" id="2VRX"/>
<dbReference type="PDBsum" id="3ZTX"/>
<dbReference type="PDBsum" id="4B8L"/>
<dbReference type="PDBsum" id="4B8M"/>
<dbReference type="PDBsum" id="4C2V"/>
<dbReference type="PDBsum" id="4C2W"/>
<dbReference type="PDBsum" id="5EYK"/>
<dbReference type="PDBsum" id="5K3Y"/>
<dbReference type="SMR" id="Q6DE08"/>
<dbReference type="BioGRID" id="99789">
    <property type="interactions" value="5"/>
</dbReference>
<dbReference type="IntAct" id="Q6DE08">
    <property type="interactions" value="3"/>
</dbReference>
<dbReference type="BindingDB" id="Q6DE08"/>
<dbReference type="ChEMBL" id="CHEMBL2176838"/>
<dbReference type="DNASU" id="398457"/>
<dbReference type="GeneID" id="398457"/>
<dbReference type="KEGG" id="xla:398457"/>
<dbReference type="AGR" id="Xenbase:XB-GENE-1019634"/>
<dbReference type="CTD" id="398457"/>
<dbReference type="Xenbase" id="XB-GENE-1019634">
    <property type="gene designation" value="aurkb.L"/>
</dbReference>
<dbReference type="OMA" id="AVDQKRW"/>
<dbReference type="OrthoDB" id="377346at2759"/>
<dbReference type="EvolutionaryTrace" id="Q6DE08"/>
<dbReference type="PRO" id="PR:Q6DE08"/>
<dbReference type="Proteomes" id="UP000186698">
    <property type="component" value="Chromosome 3L"/>
</dbReference>
<dbReference type="Bgee" id="398457">
    <property type="expression patterns" value="Expressed in egg cell and 16 other cell types or tissues"/>
</dbReference>
<dbReference type="GO" id="GO:0005813">
    <property type="term" value="C:centrosome"/>
    <property type="evidence" value="ECO:0000318"/>
    <property type="project" value="GO_Central"/>
</dbReference>
<dbReference type="GO" id="GO:0000785">
    <property type="term" value="C:chromatin"/>
    <property type="evidence" value="ECO:0000314"/>
    <property type="project" value="UniProtKB"/>
</dbReference>
<dbReference type="GO" id="GO:0005694">
    <property type="term" value="C:chromosome"/>
    <property type="evidence" value="ECO:0000314"/>
    <property type="project" value="UniProtKB"/>
</dbReference>
<dbReference type="GO" id="GO:0032133">
    <property type="term" value="C:chromosome passenger complex"/>
    <property type="evidence" value="ECO:0000353"/>
    <property type="project" value="UniProtKB"/>
</dbReference>
<dbReference type="GO" id="GO:0000775">
    <property type="term" value="C:chromosome, centromeric region"/>
    <property type="evidence" value="ECO:0000314"/>
    <property type="project" value="UniProtKB"/>
</dbReference>
<dbReference type="GO" id="GO:0000776">
    <property type="term" value="C:kinetochore"/>
    <property type="evidence" value="ECO:0000250"/>
    <property type="project" value="UniProtKB"/>
</dbReference>
<dbReference type="GO" id="GO:0030496">
    <property type="term" value="C:midbody"/>
    <property type="evidence" value="ECO:0000250"/>
    <property type="project" value="UniProtKB"/>
</dbReference>
<dbReference type="GO" id="GO:0005634">
    <property type="term" value="C:nucleus"/>
    <property type="evidence" value="ECO:0000250"/>
    <property type="project" value="UniProtKB"/>
</dbReference>
<dbReference type="GO" id="GO:0005876">
    <property type="term" value="C:spindle microtubule"/>
    <property type="evidence" value="ECO:0000318"/>
    <property type="project" value="GO_Central"/>
</dbReference>
<dbReference type="GO" id="GO:0051233">
    <property type="term" value="C:spindle midzone"/>
    <property type="evidence" value="ECO:0000318"/>
    <property type="project" value="GO_Central"/>
</dbReference>
<dbReference type="GO" id="GO:0000922">
    <property type="term" value="C:spindle pole"/>
    <property type="evidence" value="ECO:0000318"/>
    <property type="project" value="GO_Central"/>
</dbReference>
<dbReference type="GO" id="GO:0005524">
    <property type="term" value="F:ATP binding"/>
    <property type="evidence" value="ECO:0007669"/>
    <property type="project" value="UniProtKB-KW"/>
</dbReference>
<dbReference type="GO" id="GO:0035175">
    <property type="term" value="F:histone H3S10 kinase activity"/>
    <property type="evidence" value="ECO:0000314"/>
    <property type="project" value="UniProtKB"/>
</dbReference>
<dbReference type="GO" id="GO:0046872">
    <property type="term" value="F:metal ion binding"/>
    <property type="evidence" value="ECO:0007669"/>
    <property type="project" value="UniProtKB-KW"/>
</dbReference>
<dbReference type="GO" id="GO:0106310">
    <property type="term" value="F:protein serine kinase activity"/>
    <property type="evidence" value="ECO:0007669"/>
    <property type="project" value="RHEA"/>
</dbReference>
<dbReference type="GO" id="GO:0004674">
    <property type="term" value="F:protein serine/threonine kinase activity"/>
    <property type="evidence" value="ECO:0000250"/>
    <property type="project" value="UniProtKB"/>
</dbReference>
<dbReference type="GO" id="GO:0034644">
    <property type="term" value="P:cellular response to UV"/>
    <property type="evidence" value="ECO:0000250"/>
    <property type="project" value="UniProtKB"/>
</dbReference>
<dbReference type="GO" id="GO:0036089">
    <property type="term" value="P:cleavage furrow formation"/>
    <property type="evidence" value="ECO:0000250"/>
    <property type="project" value="UniProtKB"/>
</dbReference>
<dbReference type="GO" id="GO:0061952">
    <property type="term" value="P:midbody abscission"/>
    <property type="evidence" value="ECO:0000250"/>
    <property type="project" value="UniProtKB"/>
</dbReference>
<dbReference type="GO" id="GO:0044878">
    <property type="term" value="P:mitotic cytokinesis checkpoint signaling"/>
    <property type="evidence" value="ECO:0000250"/>
    <property type="project" value="UniProtKB"/>
</dbReference>
<dbReference type="GO" id="GO:0051256">
    <property type="term" value="P:mitotic spindle midzone assembly"/>
    <property type="evidence" value="ECO:0000250"/>
    <property type="project" value="UniProtKB"/>
</dbReference>
<dbReference type="GO" id="GO:0007052">
    <property type="term" value="P:mitotic spindle organization"/>
    <property type="evidence" value="ECO:0000318"/>
    <property type="project" value="GO_Central"/>
</dbReference>
<dbReference type="GO" id="GO:0002903">
    <property type="term" value="P:negative regulation of B cell apoptotic process"/>
    <property type="evidence" value="ECO:0000250"/>
    <property type="project" value="UniProtKB"/>
</dbReference>
<dbReference type="GO" id="GO:0032466">
    <property type="term" value="P:negative regulation of cytokinesis"/>
    <property type="evidence" value="ECO:0000250"/>
    <property type="project" value="UniProtKB"/>
</dbReference>
<dbReference type="GO" id="GO:0000122">
    <property type="term" value="P:negative regulation of transcription by RNA polymerase II"/>
    <property type="evidence" value="ECO:0000250"/>
    <property type="project" value="UniProtKB"/>
</dbReference>
<dbReference type="GO" id="GO:0032467">
    <property type="term" value="P:positive regulation of cytokinesis"/>
    <property type="evidence" value="ECO:0000250"/>
    <property type="project" value="UniProtKB"/>
</dbReference>
<dbReference type="GO" id="GO:0062033">
    <property type="term" value="P:positive regulation of mitotic sister chromatid segregation"/>
    <property type="evidence" value="ECO:0000250"/>
    <property type="project" value="UniProtKB"/>
</dbReference>
<dbReference type="GO" id="GO:0043687">
    <property type="term" value="P:post-translational protein modification"/>
    <property type="evidence" value="ECO:0000314"/>
    <property type="project" value="UniProtKB"/>
</dbReference>
<dbReference type="GO" id="GO:0034501">
    <property type="term" value="P:protein localization to kinetochore"/>
    <property type="evidence" value="ECO:0000250"/>
    <property type="project" value="UniProtKB"/>
</dbReference>
<dbReference type="GO" id="GO:0032465">
    <property type="term" value="P:regulation of cytokinesis"/>
    <property type="evidence" value="ECO:0000318"/>
    <property type="project" value="GO_Central"/>
</dbReference>
<dbReference type="GO" id="GO:0051225">
    <property type="term" value="P:spindle assembly"/>
    <property type="evidence" value="ECO:0000315"/>
    <property type="project" value="UniProtKB"/>
</dbReference>
<dbReference type="CDD" id="cd14117">
    <property type="entry name" value="STKc_Aurora-B_like"/>
    <property type="match status" value="1"/>
</dbReference>
<dbReference type="FunFam" id="3.30.200.20:FF:000042">
    <property type="entry name" value="Aurora kinase A"/>
    <property type="match status" value="1"/>
</dbReference>
<dbReference type="FunFam" id="1.10.510.10:FF:000235">
    <property type="entry name" value="Serine/threonine-protein kinase ark1"/>
    <property type="match status" value="1"/>
</dbReference>
<dbReference type="Gene3D" id="3.30.200.20">
    <property type="entry name" value="Phosphorylase Kinase, domain 1"/>
    <property type="match status" value="1"/>
</dbReference>
<dbReference type="Gene3D" id="1.10.510.10">
    <property type="entry name" value="Transferase(Phosphotransferase) domain 1"/>
    <property type="match status" value="1"/>
</dbReference>
<dbReference type="InterPro" id="IPR030616">
    <property type="entry name" value="Aur-like"/>
</dbReference>
<dbReference type="InterPro" id="IPR011009">
    <property type="entry name" value="Kinase-like_dom_sf"/>
</dbReference>
<dbReference type="InterPro" id="IPR000719">
    <property type="entry name" value="Prot_kinase_dom"/>
</dbReference>
<dbReference type="InterPro" id="IPR017441">
    <property type="entry name" value="Protein_kinase_ATP_BS"/>
</dbReference>
<dbReference type="InterPro" id="IPR008271">
    <property type="entry name" value="Ser/Thr_kinase_AS"/>
</dbReference>
<dbReference type="PANTHER" id="PTHR24350">
    <property type="entry name" value="SERINE/THREONINE-PROTEIN KINASE IAL-RELATED"/>
    <property type="match status" value="1"/>
</dbReference>
<dbReference type="Pfam" id="PF00069">
    <property type="entry name" value="Pkinase"/>
    <property type="match status" value="1"/>
</dbReference>
<dbReference type="SMART" id="SM00220">
    <property type="entry name" value="S_TKc"/>
    <property type="match status" value="1"/>
</dbReference>
<dbReference type="SUPFAM" id="SSF56112">
    <property type="entry name" value="Protein kinase-like (PK-like)"/>
    <property type="match status" value="1"/>
</dbReference>
<dbReference type="PROSITE" id="PS00107">
    <property type="entry name" value="PROTEIN_KINASE_ATP"/>
    <property type="match status" value="1"/>
</dbReference>
<dbReference type="PROSITE" id="PS50011">
    <property type="entry name" value="PROTEIN_KINASE_DOM"/>
    <property type="match status" value="1"/>
</dbReference>
<dbReference type="PROSITE" id="PS00108">
    <property type="entry name" value="PROTEIN_KINASE_ST"/>
    <property type="match status" value="1"/>
</dbReference>
<proteinExistence type="evidence at protein level"/>
<comment type="function">
    <text evidence="5 6 12">Serine/threonine-protein kinase component of the chromosomal passenger complex (CPC), a complex that acts as a key regulator of mitosis. The CPC complex has essential functions at the centromere in ensuring correct chromosome alignment and segregation and is required for chromatin-induced microtubule stabilization and spindle assembly. Involved in the bipolar attachment of spindle microtubules to kinetochores and is a key regulator for the onset of cytokinesis during mitosis. Required for central/midzone spindle assembly and cleavage furrow formation. Key component of the cytokinesis checkpoint, a process required to delay abscission to prevent both premature resolution of intercellular chromosome bridges and accumulation of DNA damage. Phosphorylates 'Ser-10' of histone H3 during mitosis.</text>
</comment>
<comment type="catalytic activity">
    <reaction evidence="5 6">
        <text>L-seryl-[protein] + ATP = O-phospho-L-seryl-[protein] + ADP + H(+)</text>
        <dbReference type="Rhea" id="RHEA:17989"/>
        <dbReference type="Rhea" id="RHEA-COMP:9863"/>
        <dbReference type="Rhea" id="RHEA-COMP:11604"/>
        <dbReference type="ChEBI" id="CHEBI:15378"/>
        <dbReference type="ChEBI" id="CHEBI:29999"/>
        <dbReference type="ChEBI" id="CHEBI:30616"/>
        <dbReference type="ChEBI" id="CHEBI:83421"/>
        <dbReference type="ChEBI" id="CHEBI:456216"/>
        <dbReference type="EC" id="2.7.11.1"/>
    </reaction>
</comment>
<comment type="catalytic activity">
    <reaction evidence="5 6">
        <text>L-threonyl-[protein] + ATP = O-phospho-L-threonyl-[protein] + ADP + H(+)</text>
        <dbReference type="Rhea" id="RHEA:46608"/>
        <dbReference type="Rhea" id="RHEA-COMP:11060"/>
        <dbReference type="Rhea" id="RHEA-COMP:11605"/>
        <dbReference type="ChEBI" id="CHEBI:15378"/>
        <dbReference type="ChEBI" id="CHEBI:30013"/>
        <dbReference type="ChEBI" id="CHEBI:30616"/>
        <dbReference type="ChEBI" id="CHEBI:61977"/>
        <dbReference type="ChEBI" id="CHEBI:456216"/>
        <dbReference type="EC" id="2.7.11.1"/>
    </reaction>
</comment>
<comment type="cofactor">
    <cofactor evidence="1">
        <name>Mg(2+)</name>
        <dbReference type="ChEBI" id="CHEBI:18420"/>
    </cofactor>
</comment>
<comment type="activity regulation">
    <text evidence="5 6">Kinase activity is stimulated by both birc5/survivin-binding and cell-cycle specific phosphorylation.</text>
</comment>
<comment type="subunit">
    <text evidence="4 6 7 8 9 10 11 12">Component of the CPC at least composed of survivin/birc5, incenp, cdca8/borealin and/or cdca9/dasra-A, and aurkb/aurora-B. Interacts directly (via N-terminus and kinase domain) with incenp (via C terminus), and may weakly interact (via N-terminus) with birc5.1 to stabilize the complex. Interacts with mtus1.</text>
</comment>
<comment type="interaction">
    <interactant intactId="EBI-1042262">
        <id>Q6DE08</id>
    </interactant>
    <interactant intactId="EBI-1042275">
        <id>O13024</id>
        <label>incenp-a</label>
    </interactant>
    <organismsDiffer>false</organismsDiffer>
    <experiments>2</experiments>
</comment>
<comment type="subcellular location">
    <subcellularLocation>
        <location>Nucleus</location>
    </subcellularLocation>
    <subcellularLocation>
        <location>Chromosome</location>
    </subcellularLocation>
    <text>Chromosomal until metaphase but transfers to the midzone microtubule array and the equatorial cortex during anaphase.</text>
</comment>
<comment type="PTM">
    <text evidence="6">Phosphorylated, stimulates kinase activity.</text>
</comment>
<comment type="similarity">
    <text evidence="2">Belongs to the protein kinase superfamily. Ser/Thr protein kinase family. Aurora subfamily.</text>
</comment>
<comment type="sequence caution" evidence="13">
    <conflict type="erroneous initiation">
        <sequence resource="EMBL-CDS" id="AAH41288"/>
    </conflict>
    <text>Extended N-terminus.</text>
</comment>
<reference key="1">
    <citation type="journal article" date="2000" name="Curr. Biol.">
        <title>INCENP binds the Aurora-related kinase AIRK2 and is required to target it to chromosomes, the central spindle and cleavage furrow.</title>
        <authorList>
            <person name="Adams R.R."/>
            <person name="Wheatleya S.P."/>
            <person name="Gouldsworthy A.M."/>
            <person name="Kandels-Lewis S.E."/>
            <person name="Carmena M."/>
            <person name="Smythe C."/>
            <person name="Gerloff D.L."/>
            <person name="Earnshaw W.C."/>
        </authorList>
    </citation>
    <scope>NUCLEOTIDE SEQUENCE [MRNA]</scope>
    <scope>INTERACTION WITH INCENP</scope>
    <scope>SUBCELLULAR LOCATION</scope>
</reference>
<reference key="2">
    <citation type="journal article" date="2002" name="Mol. Biol. Cell">
        <title>Aurora B kinase exists in a complex with survivin and INCENP and its kinase activity is stimulated by survivin binding and phosphorylation.</title>
        <authorList>
            <person name="Bolton M.A."/>
            <person name="Lan W."/>
            <person name="Powers S.E."/>
            <person name="McCleland M.L."/>
            <person name="Kuang J."/>
            <person name="Stukenberg P.T."/>
        </authorList>
    </citation>
    <scope>NUCLEOTIDE SEQUENCE [MRNA]</scope>
    <scope>FUNCTION</scope>
    <scope>CATALYTIC ACTIVITY</scope>
    <scope>ACTIVITY REGULATION</scope>
    <scope>INTERACTION WITH INCENP</scope>
    <scope>PUTATIVE INTERACTION WITH BIRC5.1</scope>
    <scope>IDENTIFICATION IN A COMPLEX WITH BIRC5.1 AND INCENP</scope>
    <scope>PHOSPHORYLATION</scope>
</reference>
<reference key="3">
    <citation type="submission" date="2004-07" db="EMBL/GenBank/DDBJ databases">
        <authorList>
            <consortium name="NIH - Xenopus Gene Collection (XGC) project"/>
        </authorList>
    </citation>
    <scope>NUCLEOTIDE SEQUENCE [LARGE SCALE MRNA]</scope>
    <source>
        <tissue>Ovary</tissue>
    </source>
</reference>
<reference key="4">
    <citation type="journal article" date="2001" name="J. Biol. Chem.">
        <title>Chromatin-associated protein phosphatase 1 regulates aurora-B and histone H3 phosphorylation.</title>
        <authorList>
            <person name="Murnion M.E."/>
            <person name="Adams R.R."/>
            <person name="Callister D.M."/>
            <person name="Allis C.D."/>
            <person name="Earnshaw W.C."/>
            <person name="Swedlow J.R."/>
        </authorList>
    </citation>
    <scope>FUNCTION</scope>
    <scope>CATALYTIC ACTIVITY</scope>
    <scope>ACTIVITY REGULATION</scope>
</reference>
<reference key="5">
    <citation type="journal article" date="2002" name="Genes Dev.">
        <title>Cohesin release is required for sister chromatid resolution, but not for condensin-mediated compaction, at the onset of mitosis.</title>
        <authorList>
            <person name="Losada A."/>
            <person name="Hirano M."/>
            <person name="Hirano T."/>
        </authorList>
    </citation>
    <scope>IDENTIFICATION IN A COMPLEX WITH BIRC5.1 AND INCENP</scope>
    <scope>SUBCELLULAR LOCATION</scope>
</reference>
<reference key="6">
    <citation type="journal article" date="2003" name="Dev. Cell">
        <title>An inner centromere protein that stimulates the microtubule depolymerizing activity of a KinI kinesin.</title>
        <authorList>
            <person name="Ohi R."/>
            <person name="Coughlin M.L."/>
            <person name="Lane W.S."/>
            <person name="Mitchison T.J."/>
        </authorList>
    </citation>
    <scope>INTERACTION WITH MTUS1</scope>
    <scope>IDENTIFICATION BY MASS SPECTROMETRY</scope>
</reference>
<reference key="7">
    <citation type="journal article" date="2004" name="Cell">
        <title>The chromosomal passenger complex is required for chromatin-induced microtubule stabilization and spindle assembly.</title>
        <authorList>
            <person name="Sampath S.C."/>
            <person name="Ohi R."/>
            <person name="Leismann O."/>
            <person name="Salic A."/>
            <person name="Pozniakovski A."/>
            <person name="Funabiki H."/>
        </authorList>
    </citation>
    <scope>IDENTIFICATION IN A COMPLEX WITH BIRC5.1; INCENP AND CDCA9</scope>
</reference>
<reference key="8">
    <citation type="journal article" date="2005" name="Science">
        <title>Chromosome alignment and segregation regulated by ubiquitination of survivin.</title>
        <authorList>
            <person name="Vong Q.P."/>
            <person name="Cao K."/>
            <person name="Li H.Y."/>
            <person name="Iglesias P.A."/>
            <person name="Zheng Y."/>
        </authorList>
    </citation>
    <scope>IDENTIFICATION IN A COMPLEX WITH BIRC5.1 AND INCENP</scope>
</reference>
<reference key="9">
    <citation type="journal article" date="2007" name="Dev. Cell">
        <title>Chromosomal enrichment and activation of the aurora B pathway are coupled to spatially regulate spindle assembly.</title>
        <authorList>
            <person name="Kelly A.E."/>
            <person name="Sampath S.C."/>
            <person name="Maniar T.A."/>
            <person name="Woo E.M."/>
            <person name="Chait B.T."/>
            <person name="Funabiki H."/>
        </authorList>
    </citation>
    <scope>FUNCTION</scope>
    <scope>IDENTIFICATION IN A COMPLEX WITH CDCA8; CDCA9; BIRC5.1; BIRC5.2 AND INCENP</scope>
</reference>
<reference key="10">
    <citation type="journal article" date="2005" name="Mol. Cell">
        <title>Mechanism of Aurora B activation by INCENP and inhibition by hesperadin.</title>
        <authorList>
            <person name="Sessa F."/>
            <person name="Mapelli M."/>
            <person name="Ciferri C."/>
            <person name="Tarricone C."/>
            <person name="Areces L.B."/>
            <person name="Schneider T.R."/>
            <person name="Stukenberg P.T."/>
            <person name="Musacchio A."/>
        </authorList>
    </citation>
    <scope>X-RAY CRYSTALLOGRAPHY (1.8 ANGSTROMS) OF 88-371 IN COMPLEX WITH INCENP AND HESPERADIN</scope>
</reference>